<reference key="1">
    <citation type="journal article" date="2000" name="Nucleic Acids Res.">
        <title>Genome sequences of Chlamydia trachomatis MoPn and Chlamydia pneumoniae AR39.</title>
        <authorList>
            <person name="Read T.D."/>
            <person name="Brunham R.C."/>
            <person name="Shen C."/>
            <person name="Gill S.R."/>
            <person name="Heidelberg J.F."/>
            <person name="White O."/>
            <person name="Hickey E.K."/>
            <person name="Peterson J.D."/>
            <person name="Utterback T.R."/>
            <person name="Berry K.J."/>
            <person name="Bass S."/>
            <person name="Linher K.D."/>
            <person name="Weidman J.F."/>
            <person name="Khouri H.M."/>
            <person name="Craven B."/>
            <person name="Bowman C."/>
            <person name="Dodson R.J."/>
            <person name="Gwinn M.L."/>
            <person name="Nelson W.C."/>
            <person name="DeBoy R.T."/>
            <person name="Kolonay J.F."/>
            <person name="McClarty G."/>
            <person name="Salzberg S.L."/>
            <person name="Eisen J.A."/>
            <person name="Fraser C.M."/>
        </authorList>
    </citation>
    <scope>NUCLEOTIDE SEQUENCE [LARGE SCALE GENOMIC DNA]</scope>
    <source>
        <strain>MoPn / Nigg</strain>
    </source>
</reference>
<sequence length="111" mass="12134">MKDPYDVVKRHYVTEKAKMLEGLSLGGGEGKKKGSFCKDPKYTFVVAGDATKPMIAEAIEAIYSNKGVKVKKVNTVCVKPQPTRIFRGKRKGRTAGFKKAIVTFVDGHSIG</sequence>
<proteinExistence type="inferred from homology"/>
<name>RL23_CHLMU</name>
<evidence type="ECO:0000255" key="1">
    <source>
        <dbReference type="HAMAP-Rule" id="MF_01369"/>
    </source>
</evidence>
<evidence type="ECO:0000305" key="2"/>
<keyword id="KW-0687">Ribonucleoprotein</keyword>
<keyword id="KW-0689">Ribosomal protein</keyword>
<keyword id="KW-0694">RNA-binding</keyword>
<keyword id="KW-0699">rRNA-binding</keyword>
<dbReference type="EMBL" id="AE002160">
    <property type="protein sequence ID" value="AAF39615.1"/>
    <property type="molecule type" value="Genomic_DNA"/>
</dbReference>
<dbReference type="PIR" id="B81661">
    <property type="entry name" value="B81661"/>
</dbReference>
<dbReference type="RefSeq" id="WP_010231645.1">
    <property type="nucleotide sequence ID" value="NZ_CP063055.1"/>
</dbReference>
<dbReference type="SMR" id="Q9PJL6"/>
<dbReference type="GeneID" id="1246180"/>
<dbReference type="KEGG" id="cmu:TC_0813"/>
<dbReference type="eggNOG" id="COG0089">
    <property type="taxonomic scope" value="Bacteria"/>
</dbReference>
<dbReference type="HOGENOM" id="CLU_037562_3_1_0"/>
<dbReference type="OrthoDB" id="9793353at2"/>
<dbReference type="Proteomes" id="UP000000800">
    <property type="component" value="Chromosome"/>
</dbReference>
<dbReference type="GO" id="GO:1990904">
    <property type="term" value="C:ribonucleoprotein complex"/>
    <property type="evidence" value="ECO:0007669"/>
    <property type="project" value="UniProtKB-KW"/>
</dbReference>
<dbReference type="GO" id="GO:0005840">
    <property type="term" value="C:ribosome"/>
    <property type="evidence" value="ECO:0007669"/>
    <property type="project" value="UniProtKB-KW"/>
</dbReference>
<dbReference type="GO" id="GO:0019843">
    <property type="term" value="F:rRNA binding"/>
    <property type="evidence" value="ECO:0007669"/>
    <property type="project" value="UniProtKB-UniRule"/>
</dbReference>
<dbReference type="GO" id="GO:0003735">
    <property type="term" value="F:structural constituent of ribosome"/>
    <property type="evidence" value="ECO:0007669"/>
    <property type="project" value="InterPro"/>
</dbReference>
<dbReference type="GO" id="GO:0006412">
    <property type="term" value="P:translation"/>
    <property type="evidence" value="ECO:0007669"/>
    <property type="project" value="UniProtKB-UniRule"/>
</dbReference>
<dbReference type="Gene3D" id="3.30.70.330">
    <property type="match status" value="1"/>
</dbReference>
<dbReference type="HAMAP" id="MF_01369_B">
    <property type="entry name" value="Ribosomal_uL23_B"/>
    <property type="match status" value="1"/>
</dbReference>
<dbReference type="InterPro" id="IPR012677">
    <property type="entry name" value="Nucleotide-bd_a/b_plait_sf"/>
</dbReference>
<dbReference type="InterPro" id="IPR013025">
    <property type="entry name" value="Ribosomal_uL23-like"/>
</dbReference>
<dbReference type="InterPro" id="IPR012678">
    <property type="entry name" value="Ribosomal_uL23/eL15/eS24_sf"/>
</dbReference>
<dbReference type="NCBIfam" id="NF004362">
    <property type="entry name" value="PRK05738.2-2"/>
    <property type="match status" value="1"/>
</dbReference>
<dbReference type="Pfam" id="PF00276">
    <property type="entry name" value="Ribosomal_L23"/>
    <property type="match status" value="1"/>
</dbReference>
<dbReference type="SUPFAM" id="SSF54189">
    <property type="entry name" value="Ribosomal proteins S24e, L23 and L15e"/>
    <property type="match status" value="1"/>
</dbReference>
<feature type="chain" id="PRO_0000129403" description="Large ribosomal subunit protein uL23">
    <location>
        <begin position="1"/>
        <end position="111"/>
    </location>
</feature>
<protein>
    <recommendedName>
        <fullName evidence="1">Large ribosomal subunit protein uL23</fullName>
    </recommendedName>
    <alternativeName>
        <fullName evidence="2">50S ribosomal protein L23</fullName>
    </alternativeName>
</protein>
<accession>Q9PJL6</accession>
<comment type="function">
    <text evidence="1">One of the early assembly proteins it binds 23S rRNA. One of the proteins that surrounds the polypeptide exit tunnel on the outside of the ribosome. Forms the main docking site for trigger factor binding to the ribosome.</text>
</comment>
<comment type="subunit">
    <text evidence="1">Part of the 50S ribosomal subunit. Contacts protein L29, and trigger factor when it is bound to the ribosome.</text>
</comment>
<comment type="similarity">
    <text evidence="1">Belongs to the universal ribosomal protein uL23 family.</text>
</comment>
<organism>
    <name type="scientific">Chlamydia muridarum (strain MoPn / Nigg)</name>
    <dbReference type="NCBI Taxonomy" id="243161"/>
    <lineage>
        <taxon>Bacteria</taxon>
        <taxon>Pseudomonadati</taxon>
        <taxon>Chlamydiota</taxon>
        <taxon>Chlamydiia</taxon>
        <taxon>Chlamydiales</taxon>
        <taxon>Chlamydiaceae</taxon>
        <taxon>Chlamydia/Chlamydophila group</taxon>
        <taxon>Chlamydia</taxon>
    </lineage>
</organism>
<gene>
    <name evidence="1" type="primary">rplW</name>
    <name type="ordered locus">TC_0813</name>
</gene>